<proteinExistence type="inferred from homology"/>
<comment type="similarity">
    <text evidence="1">Belongs to the UPF0349 family.</text>
</comment>
<organism>
    <name type="scientific">Listeria monocytogenes serotype 4a (strain HCC23)</name>
    <dbReference type="NCBI Taxonomy" id="552536"/>
    <lineage>
        <taxon>Bacteria</taxon>
        <taxon>Bacillati</taxon>
        <taxon>Bacillota</taxon>
        <taxon>Bacilli</taxon>
        <taxon>Bacillales</taxon>
        <taxon>Listeriaceae</taxon>
        <taxon>Listeria</taxon>
    </lineage>
</organism>
<name>Y204_LISMH</name>
<protein>
    <recommendedName>
        <fullName evidence="1">UPF0349 protein LMHCC_0204</fullName>
    </recommendedName>
</protein>
<sequence>MNPIVEFCVNNLASGADAAFAKLDADDSLDVIEYDCLTYCDLCATSLFALVDGEVVRGETAEELVANIYTFLEENPF</sequence>
<accession>B8DDG0</accession>
<reference key="1">
    <citation type="journal article" date="2011" name="J. Bacteriol.">
        <title>Genome sequence of lineage III Listeria monocytogenes strain HCC23.</title>
        <authorList>
            <person name="Steele C.L."/>
            <person name="Donaldson J.R."/>
            <person name="Paul D."/>
            <person name="Banes M.M."/>
            <person name="Arick T."/>
            <person name="Bridges S.M."/>
            <person name="Lawrence M.L."/>
        </authorList>
    </citation>
    <scope>NUCLEOTIDE SEQUENCE [LARGE SCALE GENOMIC DNA]</scope>
    <source>
        <strain>HCC23</strain>
    </source>
</reference>
<gene>
    <name type="ordered locus">LMHCC_0204</name>
</gene>
<feature type="chain" id="PRO_1000185239" description="UPF0349 protein LMHCC_0204">
    <location>
        <begin position="1"/>
        <end position="77"/>
    </location>
</feature>
<evidence type="ECO:0000255" key="1">
    <source>
        <dbReference type="HAMAP-Rule" id="MF_01542"/>
    </source>
</evidence>
<dbReference type="EMBL" id="CP001175">
    <property type="protein sequence ID" value="ACK38566.1"/>
    <property type="molecule type" value="Genomic_DNA"/>
</dbReference>
<dbReference type="RefSeq" id="WP_003725587.1">
    <property type="nucleotide sequence ID" value="NC_011660.1"/>
</dbReference>
<dbReference type="SMR" id="B8DDG0"/>
<dbReference type="KEGG" id="lmh:LMHCC_0204"/>
<dbReference type="HOGENOM" id="CLU_182025_0_0_9"/>
<dbReference type="HAMAP" id="MF_01542">
    <property type="entry name" value="UPF0349"/>
    <property type="match status" value="1"/>
</dbReference>
<dbReference type="InterPro" id="IPR009910">
    <property type="entry name" value="DUF1450"/>
</dbReference>
<dbReference type="InterPro" id="IPR022916">
    <property type="entry name" value="UPF0349"/>
</dbReference>
<dbReference type="NCBIfam" id="NF010190">
    <property type="entry name" value="PRK13669.1"/>
    <property type="match status" value="1"/>
</dbReference>
<dbReference type="Pfam" id="PF07293">
    <property type="entry name" value="DUF1450"/>
    <property type="match status" value="1"/>
</dbReference>